<feature type="chain" id="PRO_0000112633" description="Acetylglutamate kinase">
    <location>
        <begin position="1"/>
        <end position="264"/>
    </location>
</feature>
<feature type="binding site" evidence="1">
    <location>
        <begin position="50"/>
        <end position="51"/>
    </location>
    <ligand>
        <name>substrate</name>
    </ligand>
</feature>
<feature type="binding site" evidence="1">
    <location>
        <position position="72"/>
    </location>
    <ligand>
        <name>substrate</name>
    </ligand>
</feature>
<feature type="binding site" evidence="1">
    <location>
        <position position="164"/>
    </location>
    <ligand>
        <name>substrate</name>
    </ligand>
</feature>
<feature type="site" description="Transition state stabilizer" evidence="1">
    <location>
        <position position="14"/>
    </location>
</feature>
<feature type="site" description="Transition state stabilizer" evidence="1">
    <location>
        <position position="223"/>
    </location>
</feature>
<name>ARGB_MORPR</name>
<reference key="1">
    <citation type="journal article" date="2000" name="J. Bacteriol.">
        <title>Evolution of arginine biosynthesis in the bacterial domain: novel gene-enzyme relationships from psychrophilic Moritella strains (Vibrionaceae) and evolutionary significance of N-alpha-acetyl ornithinase.</title>
        <authorList>
            <person name="Xu Y."/>
            <person name="Liang Z."/>
            <person name="Legrain C."/>
            <person name="Ruger H.J."/>
            <person name="Glansdorff N."/>
        </authorList>
    </citation>
    <scope>NUCLEOTIDE SEQUENCE [GENOMIC DNA]</scope>
    <source>
        <strain>2674</strain>
    </source>
</reference>
<evidence type="ECO:0000255" key="1">
    <source>
        <dbReference type="HAMAP-Rule" id="MF_00082"/>
    </source>
</evidence>
<dbReference type="EC" id="2.7.2.8" evidence="1"/>
<dbReference type="EMBL" id="AJ252020">
    <property type="protein sequence ID" value="CAB95015.1"/>
    <property type="molecule type" value="Genomic_DNA"/>
</dbReference>
<dbReference type="SMR" id="Q9K4Z5"/>
<dbReference type="UniPathway" id="UPA00068">
    <property type="reaction ID" value="UER00107"/>
</dbReference>
<dbReference type="GO" id="GO:0005737">
    <property type="term" value="C:cytoplasm"/>
    <property type="evidence" value="ECO:0007669"/>
    <property type="project" value="UniProtKB-SubCell"/>
</dbReference>
<dbReference type="GO" id="GO:0003991">
    <property type="term" value="F:acetylglutamate kinase activity"/>
    <property type="evidence" value="ECO:0007669"/>
    <property type="project" value="UniProtKB-UniRule"/>
</dbReference>
<dbReference type="GO" id="GO:0005524">
    <property type="term" value="F:ATP binding"/>
    <property type="evidence" value="ECO:0007669"/>
    <property type="project" value="UniProtKB-UniRule"/>
</dbReference>
<dbReference type="GO" id="GO:0042450">
    <property type="term" value="P:arginine biosynthetic process via ornithine"/>
    <property type="evidence" value="ECO:0007669"/>
    <property type="project" value="UniProtKB-UniRule"/>
</dbReference>
<dbReference type="GO" id="GO:0006526">
    <property type="term" value="P:L-arginine biosynthetic process"/>
    <property type="evidence" value="ECO:0007669"/>
    <property type="project" value="UniProtKB-UniPathway"/>
</dbReference>
<dbReference type="CDD" id="cd04249">
    <property type="entry name" value="AAK_NAGK-NC"/>
    <property type="match status" value="1"/>
</dbReference>
<dbReference type="Gene3D" id="3.40.1160.10">
    <property type="entry name" value="Acetylglutamate kinase-like"/>
    <property type="match status" value="1"/>
</dbReference>
<dbReference type="HAMAP" id="MF_00082">
    <property type="entry name" value="ArgB"/>
    <property type="match status" value="1"/>
</dbReference>
<dbReference type="InterPro" id="IPR036393">
    <property type="entry name" value="AceGlu_kinase-like_sf"/>
</dbReference>
<dbReference type="InterPro" id="IPR004662">
    <property type="entry name" value="AcgluKinase_fam"/>
</dbReference>
<dbReference type="InterPro" id="IPR037528">
    <property type="entry name" value="ArgB"/>
</dbReference>
<dbReference type="InterPro" id="IPR001048">
    <property type="entry name" value="Asp/Glu/Uridylate_kinase"/>
</dbReference>
<dbReference type="InterPro" id="IPR041731">
    <property type="entry name" value="NAGK-NC"/>
</dbReference>
<dbReference type="NCBIfam" id="TIGR00761">
    <property type="entry name" value="argB"/>
    <property type="match status" value="1"/>
</dbReference>
<dbReference type="PANTHER" id="PTHR23342">
    <property type="entry name" value="N-ACETYLGLUTAMATE SYNTHASE"/>
    <property type="match status" value="1"/>
</dbReference>
<dbReference type="PANTHER" id="PTHR23342:SF0">
    <property type="entry name" value="N-ACETYLGLUTAMATE SYNTHASE, MITOCHONDRIAL"/>
    <property type="match status" value="1"/>
</dbReference>
<dbReference type="Pfam" id="PF00696">
    <property type="entry name" value="AA_kinase"/>
    <property type="match status" value="1"/>
</dbReference>
<dbReference type="PIRSF" id="PIRSF000728">
    <property type="entry name" value="NAGK"/>
    <property type="match status" value="1"/>
</dbReference>
<dbReference type="SUPFAM" id="SSF53633">
    <property type="entry name" value="Carbamate kinase-like"/>
    <property type="match status" value="1"/>
</dbReference>
<comment type="function">
    <text evidence="1">Catalyzes the ATP-dependent phosphorylation of N-acetyl-L-glutamate.</text>
</comment>
<comment type="catalytic activity">
    <reaction evidence="1">
        <text>N-acetyl-L-glutamate + ATP = N-acetyl-L-glutamyl 5-phosphate + ADP</text>
        <dbReference type="Rhea" id="RHEA:14629"/>
        <dbReference type="ChEBI" id="CHEBI:30616"/>
        <dbReference type="ChEBI" id="CHEBI:44337"/>
        <dbReference type="ChEBI" id="CHEBI:57936"/>
        <dbReference type="ChEBI" id="CHEBI:456216"/>
        <dbReference type="EC" id="2.7.2.8"/>
    </reaction>
</comment>
<comment type="pathway">
    <text evidence="1">Amino-acid biosynthesis; L-arginine biosynthesis; N(2)-acetyl-L-ornithine from L-glutamate: step 2/4.</text>
</comment>
<comment type="subcellular location">
    <subcellularLocation>
        <location evidence="1">Cytoplasm</location>
    </subcellularLocation>
</comment>
<comment type="similarity">
    <text evidence="1">Belongs to the acetylglutamate kinase family. ArgB subfamily.</text>
</comment>
<proteinExistence type="inferred from homology"/>
<organism>
    <name type="scientific">Moritella profunda</name>
    <dbReference type="NCBI Taxonomy" id="111291"/>
    <lineage>
        <taxon>Bacteria</taxon>
        <taxon>Pseudomonadati</taxon>
        <taxon>Pseudomonadota</taxon>
        <taxon>Gammaproteobacteria</taxon>
        <taxon>Alteromonadales</taxon>
        <taxon>Moritellaceae</taxon>
        <taxon>Moritella</taxon>
    </lineage>
</organism>
<keyword id="KW-0028">Amino-acid biosynthesis</keyword>
<keyword id="KW-0055">Arginine biosynthesis</keyword>
<keyword id="KW-0067">ATP-binding</keyword>
<keyword id="KW-0963">Cytoplasm</keyword>
<keyword id="KW-0418">Kinase</keyword>
<keyword id="KW-0547">Nucleotide-binding</keyword>
<keyword id="KW-0808">Transferase</keyword>
<gene>
    <name evidence="1" type="primary">argB</name>
</gene>
<accession>Q9K4Z5</accession>
<protein>
    <recommendedName>
        <fullName evidence="1">Acetylglutamate kinase</fullName>
        <ecNumber evidence="1">2.7.2.8</ecNumber>
    </recommendedName>
    <alternativeName>
        <fullName evidence="1">N-acetyl-L-glutamate 5-phosphotransferase</fullName>
    </alternativeName>
    <alternativeName>
        <fullName evidence="1">NAG kinase</fullName>
        <shortName evidence="1">NAGK</shortName>
    </alternativeName>
</protein>
<sequence>MTMTATMTTPLVLKLGGALLENETALEQLFTALSEYKSTSSRPLVLVHGGGCFVDELLAKMNIVSEKKNGLRITPFSDIGYITGALAGTANKVLMAQGLKSGAKVVGLSLADGGIATVTQSTAGLGAVGECEAGDPTLLTALLSGGFLPIISSIGIDAQGQLLNVNADQAATAICETLDADLVMLSDVAGILDADMQLIPEMNSNYAAELIAAGVINGGMEVKVKAALKAAASLNRDIKLASWKVPERLVALLNGEVEGTKVSS</sequence>